<protein>
    <recommendedName>
        <fullName>Transmembrane protein 254</fullName>
    </recommendedName>
</protein>
<keyword id="KW-0007">Acetylation</keyword>
<keyword id="KW-0472">Membrane</keyword>
<keyword id="KW-1185">Reference proteome</keyword>
<keyword id="KW-0812">Transmembrane</keyword>
<keyword id="KW-1133">Transmembrane helix</keyword>
<proteinExistence type="evidence at transcript level"/>
<organism>
    <name type="scientific">Pongo abelii</name>
    <name type="common">Sumatran orangutan</name>
    <name type="synonym">Pongo pygmaeus abelii</name>
    <dbReference type="NCBI Taxonomy" id="9601"/>
    <lineage>
        <taxon>Eukaryota</taxon>
        <taxon>Metazoa</taxon>
        <taxon>Chordata</taxon>
        <taxon>Craniata</taxon>
        <taxon>Vertebrata</taxon>
        <taxon>Euteleostomi</taxon>
        <taxon>Mammalia</taxon>
        <taxon>Eutheria</taxon>
        <taxon>Euarchontoglires</taxon>
        <taxon>Primates</taxon>
        <taxon>Haplorrhini</taxon>
        <taxon>Catarrhini</taxon>
        <taxon>Hominidae</taxon>
        <taxon>Pongo</taxon>
    </lineage>
</organism>
<sequence length="123" mass="14114">MATAAGAAYFQRGSLFWFTVITLSFGYYTWVVFWPQSIPYQNLGPLGPFTQYLVDHHHTLLCNGYWLAWLIHVGESLYAIVLCKHKGITSGRAQLLWFLQTFFFGIASLTILIAYKGKRQKQT</sequence>
<gene>
    <name type="primary">TMEM254</name>
</gene>
<dbReference type="EMBL" id="CR859483">
    <property type="protein sequence ID" value="CAH91654.1"/>
    <property type="molecule type" value="mRNA"/>
</dbReference>
<dbReference type="RefSeq" id="NP_001127449.1">
    <property type="nucleotide sequence ID" value="NM_001133977.1"/>
</dbReference>
<dbReference type="FunCoup" id="Q5R9A6">
    <property type="interactions" value="76"/>
</dbReference>
<dbReference type="STRING" id="9601.ENSPPYP00000002668"/>
<dbReference type="GeneID" id="100174520"/>
<dbReference type="KEGG" id="pon:100174520"/>
<dbReference type="CTD" id="80195"/>
<dbReference type="eggNOG" id="ENOG502S4F5">
    <property type="taxonomic scope" value="Eukaryota"/>
</dbReference>
<dbReference type="HOGENOM" id="CLU_150378_0_0_1"/>
<dbReference type="InParanoid" id="Q5R9A6"/>
<dbReference type="OrthoDB" id="9984821at2759"/>
<dbReference type="TreeFam" id="TF328617"/>
<dbReference type="Proteomes" id="UP000001595">
    <property type="component" value="Chromosome 10"/>
</dbReference>
<dbReference type="GO" id="GO:0016020">
    <property type="term" value="C:membrane"/>
    <property type="evidence" value="ECO:0007669"/>
    <property type="project" value="UniProtKB-SubCell"/>
</dbReference>
<dbReference type="InterPro" id="IPR028110">
    <property type="entry name" value="TMEM254"/>
</dbReference>
<dbReference type="PANTHER" id="PTHR34104">
    <property type="entry name" value="TRANSMEMBRANE PROTEIN 254"/>
    <property type="match status" value="1"/>
</dbReference>
<dbReference type="PANTHER" id="PTHR34104:SF3">
    <property type="entry name" value="TRANSMEMBRANE PROTEIN 254"/>
    <property type="match status" value="1"/>
</dbReference>
<dbReference type="Pfam" id="PF14934">
    <property type="entry name" value="TMEM254"/>
    <property type="match status" value="1"/>
</dbReference>
<reference key="1">
    <citation type="submission" date="2004-11" db="EMBL/GenBank/DDBJ databases">
        <authorList>
            <consortium name="The German cDNA consortium"/>
        </authorList>
    </citation>
    <scope>NUCLEOTIDE SEQUENCE [LARGE SCALE MRNA]</scope>
    <source>
        <tissue>Brain cortex</tissue>
    </source>
</reference>
<evidence type="ECO:0000250" key="1">
    <source>
        <dbReference type="UniProtKB" id="Q8TBM7"/>
    </source>
</evidence>
<evidence type="ECO:0000255" key="2"/>
<evidence type="ECO:0000305" key="3"/>
<feature type="initiator methionine" description="Removed" evidence="1">
    <location>
        <position position="1"/>
    </location>
</feature>
<feature type="chain" id="PRO_0000089798" description="Transmembrane protein 254">
    <location>
        <begin position="2"/>
        <end position="123"/>
    </location>
</feature>
<feature type="transmembrane region" description="Helical" evidence="2">
    <location>
        <begin position="15"/>
        <end position="35"/>
    </location>
</feature>
<feature type="transmembrane region" description="Helical" evidence="2">
    <location>
        <begin position="61"/>
        <end position="81"/>
    </location>
</feature>
<feature type="transmembrane region" description="Helical" evidence="2">
    <location>
        <begin position="95"/>
        <end position="115"/>
    </location>
</feature>
<feature type="modified residue" description="N-acetylalanine" evidence="1">
    <location>
        <position position="2"/>
    </location>
</feature>
<accession>Q5R9A6</accession>
<name>TM254_PONAB</name>
<comment type="subcellular location">
    <subcellularLocation>
        <location evidence="3">Membrane</location>
        <topology evidence="3">Multi-pass membrane protein</topology>
    </subcellularLocation>
</comment>